<reference key="1">
    <citation type="journal article" date="2003" name="Nucleic Acids Res.">
        <title>Genome sequence of Chlamydophila caviae (Chlamydia psittaci GPIC): examining the role of niche-specific genes in the evolution of the Chlamydiaceae.</title>
        <authorList>
            <person name="Read T.D."/>
            <person name="Myers G.S.A."/>
            <person name="Brunham R.C."/>
            <person name="Nelson W.C."/>
            <person name="Paulsen I.T."/>
            <person name="Heidelberg J.F."/>
            <person name="Holtzapple E.K."/>
            <person name="Khouri H.M."/>
            <person name="Federova N.B."/>
            <person name="Carty H.A."/>
            <person name="Umayam L.A."/>
            <person name="Haft D.H."/>
            <person name="Peterson J.D."/>
            <person name="Beanan M.J."/>
            <person name="White O."/>
            <person name="Salzberg S.L."/>
            <person name="Hsia R.-C."/>
            <person name="McClarty G."/>
            <person name="Rank R.G."/>
            <person name="Bavoil P.M."/>
            <person name="Fraser C.M."/>
        </authorList>
    </citation>
    <scope>NUCLEOTIDE SEQUENCE [LARGE SCALE GENOMIC DNA]</scope>
    <source>
        <strain>ATCC VR-813 / DSM 19441 / 03DC25 / GPIC</strain>
    </source>
</reference>
<keyword id="KW-0067">ATP-binding</keyword>
<keyword id="KW-0963">Cytoplasm</keyword>
<keyword id="KW-0418">Kinase</keyword>
<keyword id="KW-0460">Magnesium</keyword>
<keyword id="KW-0479">Metal-binding</keyword>
<keyword id="KW-0546">Nucleotide metabolism</keyword>
<keyword id="KW-0547">Nucleotide-binding</keyword>
<keyword id="KW-0597">Phosphoprotein</keyword>
<keyword id="KW-0808">Transferase</keyword>
<evidence type="ECO:0000255" key="1">
    <source>
        <dbReference type="HAMAP-Rule" id="MF_00451"/>
    </source>
</evidence>
<gene>
    <name evidence="1" type="primary">ndk</name>
    <name type="ordered locus">CCA_00121</name>
</gene>
<comment type="function">
    <text evidence="1">Major role in the synthesis of nucleoside triphosphates other than ATP. The ATP gamma phosphate is transferred to the NDP beta phosphate via a ping-pong mechanism, using a phosphorylated active-site intermediate.</text>
</comment>
<comment type="catalytic activity">
    <reaction evidence="1">
        <text>a 2'-deoxyribonucleoside 5'-diphosphate + ATP = a 2'-deoxyribonucleoside 5'-triphosphate + ADP</text>
        <dbReference type="Rhea" id="RHEA:44640"/>
        <dbReference type="ChEBI" id="CHEBI:30616"/>
        <dbReference type="ChEBI" id="CHEBI:61560"/>
        <dbReference type="ChEBI" id="CHEBI:73316"/>
        <dbReference type="ChEBI" id="CHEBI:456216"/>
        <dbReference type="EC" id="2.7.4.6"/>
    </reaction>
</comment>
<comment type="catalytic activity">
    <reaction evidence="1">
        <text>a ribonucleoside 5'-diphosphate + ATP = a ribonucleoside 5'-triphosphate + ADP</text>
        <dbReference type="Rhea" id="RHEA:18113"/>
        <dbReference type="ChEBI" id="CHEBI:30616"/>
        <dbReference type="ChEBI" id="CHEBI:57930"/>
        <dbReference type="ChEBI" id="CHEBI:61557"/>
        <dbReference type="ChEBI" id="CHEBI:456216"/>
        <dbReference type="EC" id="2.7.4.6"/>
    </reaction>
</comment>
<comment type="cofactor">
    <cofactor evidence="1">
        <name>Mg(2+)</name>
        <dbReference type="ChEBI" id="CHEBI:18420"/>
    </cofactor>
</comment>
<comment type="subunit">
    <text evidence="1">Homotetramer.</text>
</comment>
<comment type="subcellular location">
    <subcellularLocation>
        <location evidence="1">Cytoplasm</location>
    </subcellularLocation>
</comment>
<comment type="similarity">
    <text evidence="1">Belongs to the NDK family.</text>
</comment>
<dbReference type="EC" id="2.7.4.6" evidence="1"/>
<dbReference type="EMBL" id="AE015925">
    <property type="protein sequence ID" value="AAP04873.1"/>
    <property type="molecule type" value="Genomic_DNA"/>
</dbReference>
<dbReference type="RefSeq" id="WP_011006094.1">
    <property type="nucleotide sequence ID" value="NC_003361.3"/>
</dbReference>
<dbReference type="SMR" id="Q824M4"/>
<dbReference type="STRING" id="227941.CCA_00121"/>
<dbReference type="KEGG" id="cca:CCA_00121"/>
<dbReference type="eggNOG" id="COG0105">
    <property type="taxonomic scope" value="Bacteria"/>
</dbReference>
<dbReference type="HOGENOM" id="CLU_060216_8_1_0"/>
<dbReference type="OrthoDB" id="9801161at2"/>
<dbReference type="Proteomes" id="UP000002193">
    <property type="component" value="Chromosome"/>
</dbReference>
<dbReference type="GO" id="GO:0005737">
    <property type="term" value="C:cytoplasm"/>
    <property type="evidence" value="ECO:0007669"/>
    <property type="project" value="UniProtKB-SubCell"/>
</dbReference>
<dbReference type="GO" id="GO:0005524">
    <property type="term" value="F:ATP binding"/>
    <property type="evidence" value="ECO:0007669"/>
    <property type="project" value="UniProtKB-UniRule"/>
</dbReference>
<dbReference type="GO" id="GO:0046872">
    <property type="term" value="F:metal ion binding"/>
    <property type="evidence" value="ECO:0007669"/>
    <property type="project" value="UniProtKB-KW"/>
</dbReference>
<dbReference type="GO" id="GO:0004550">
    <property type="term" value="F:nucleoside diphosphate kinase activity"/>
    <property type="evidence" value="ECO:0007669"/>
    <property type="project" value="UniProtKB-UniRule"/>
</dbReference>
<dbReference type="GO" id="GO:0006241">
    <property type="term" value="P:CTP biosynthetic process"/>
    <property type="evidence" value="ECO:0007669"/>
    <property type="project" value="UniProtKB-UniRule"/>
</dbReference>
<dbReference type="GO" id="GO:0006183">
    <property type="term" value="P:GTP biosynthetic process"/>
    <property type="evidence" value="ECO:0007669"/>
    <property type="project" value="UniProtKB-UniRule"/>
</dbReference>
<dbReference type="GO" id="GO:0006228">
    <property type="term" value="P:UTP biosynthetic process"/>
    <property type="evidence" value="ECO:0007669"/>
    <property type="project" value="UniProtKB-UniRule"/>
</dbReference>
<dbReference type="CDD" id="cd04413">
    <property type="entry name" value="NDPk_I"/>
    <property type="match status" value="1"/>
</dbReference>
<dbReference type="FunFam" id="3.30.70.141:FF:000001">
    <property type="entry name" value="Nucleoside diphosphate kinase"/>
    <property type="match status" value="1"/>
</dbReference>
<dbReference type="Gene3D" id="3.30.70.141">
    <property type="entry name" value="Nucleoside diphosphate kinase-like domain"/>
    <property type="match status" value="1"/>
</dbReference>
<dbReference type="HAMAP" id="MF_00451">
    <property type="entry name" value="NDP_kinase"/>
    <property type="match status" value="1"/>
</dbReference>
<dbReference type="InterPro" id="IPR034907">
    <property type="entry name" value="NDK-like_dom"/>
</dbReference>
<dbReference type="InterPro" id="IPR036850">
    <property type="entry name" value="NDK-like_dom_sf"/>
</dbReference>
<dbReference type="InterPro" id="IPR001564">
    <property type="entry name" value="Nucleoside_diP_kinase"/>
</dbReference>
<dbReference type="InterPro" id="IPR023005">
    <property type="entry name" value="Nucleoside_diP_kinase_AS"/>
</dbReference>
<dbReference type="NCBIfam" id="NF001908">
    <property type="entry name" value="PRK00668.1"/>
    <property type="match status" value="1"/>
</dbReference>
<dbReference type="PANTHER" id="PTHR11349">
    <property type="entry name" value="NUCLEOSIDE DIPHOSPHATE KINASE"/>
    <property type="match status" value="1"/>
</dbReference>
<dbReference type="Pfam" id="PF00334">
    <property type="entry name" value="NDK"/>
    <property type="match status" value="1"/>
</dbReference>
<dbReference type="PRINTS" id="PR01243">
    <property type="entry name" value="NUCDPKINASE"/>
</dbReference>
<dbReference type="SMART" id="SM00562">
    <property type="entry name" value="NDK"/>
    <property type="match status" value="1"/>
</dbReference>
<dbReference type="SUPFAM" id="SSF54919">
    <property type="entry name" value="Nucleoside diphosphate kinase, NDK"/>
    <property type="match status" value="1"/>
</dbReference>
<dbReference type="PROSITE" id="PS00469">
    <property type="entry name" value="NDPK"/>
    <property type="match status" value="1"/>
</dbReference>
<dbReference type="PROSITE" id="PS51374">
    <property type="entry name" value="NDPK_LIKE"/>
    <property type="match status" value="1"/>
</dbReference>
<feature type="chain" id="PRO_0000136964" description="Nucleoside diphosphate kinase">
    <location>
        <begin position="1"/>
        <end position="141"/>
    </location>
</feature>
<feature type="active site" description="Pros-phosphohistidine intermediate" evidence="1">
    <location>
        <position position="115"/>
    </location>
</feature>
<feature type="binding site" evidence="1">
    <location>
        <position position="9"/>
    </location>
    <ligand>
        <name>ATP</name>
        <dbReference type="ChEBI" id="CHEBI:30616"/>
    </ligand>
</feature>
<feature type="binding site" evidence="1">
    <location>
        <position position="57"/>
    </location>
    <ligand>
        <name>ATP</name>
        <dbReference type="ChEBI" id="CHEBI:30616"/>
    </ligand>
</feature>
<feature type="binding site" evidence="1">
    <location>
        <position position="85"/>
    </location>
    <ligand>
        <name>ATP</name>
        <dbReference type="ChEBI" id="CHEBI:30616"/>
    </ligand>
</feature>
<feature type="binding site" evidence="1">
    <location>
        <position position="91"/>
    </location>
    <ligand>
        <name>ATP</name>
        <dbReference type="ChEBI" id="CHEBI:30616"/>
    </ligand>
</feature>
<feature type="binding site" evidence="1">
    <location>
        <position position="102"/>
    </location>
    <ligand>
        <name>ATP</name>
        <dbReference type="ChEBI" id="CHEBI:30616"/>
    </ligand>
</feature>
<feature type="binding site" evidence="1">
    <location>
        <position position="112"/>
    </location>
    <ligand>
        <name>ATP</name>
        <dbReference type="ChEBI" id="CHEBI:30616"/>
    </ligand>
</feature>
<sequence length="141" mass="15384">MEQTLSIIKPDSVGKAHIGEIVAIFEKSGFRIAAMKMVHLSVKEAEGFYAVHKSRPFFQELVDFMISGPVVVMVLEGDNAVVRNREIMGATNPQEAAQGTIRAQFGESIGINAVHGSDSLENAAIEINYFFSKIEIVNSAK</sequence>
<accession>Q824M4</accession>
<protein>
    <recommendedName>
        <fullName evidence="1">Nucleoside diphosphate kinase</fullName>
        <shortName evidence="1">NDK</shortName>
        <shortName evidence="1">NDP kinase</shortName>
        <ecNumber evidence="1">2.7.4.6</ecNumber>
    </recommendedName>
    <alternativeName>
        <fullName evidence="1">Nucleoside-2-P kinase</fullName>
    </alternativeName>
</protein>
<organism>
    <name type="scientific">Chlamydia caviae (strain ATCC VR-813 / DSM 19441 / 03DC25 / GPIC)</name>
    <name type="common">Chlamydophila caviae</name>
    <dbReference type="NCBI Taxonomy" id="227941"/>
    <lineage>
        <taxon>Bacteria</taxon>
        <taxon>Pseudomonadati</taxon>
        <taxon>Chlamydiota</taxon>
        <taxon>Chlamydiia</taxon>
        <taxon>Chlamydiales</taxon>
        <taxon>Chlamydiaceae</taxon>
        <taxon>Chlamydia/Chlamydophila group</taxon>
        <taxon>Chlamydia</taxon>
    </lineage>
</organism>
<proteinExistence type="inferred from homology"/>
<name>NDK_CHLCV</name>